<comment type="function">
    <text evidence="1">Na(+)/H(+) antiporter that extrudes sodium in exchange for external protons.</text>
</comment>
<comment type="catalytic activity">
    <reaction evidence="1">
        <text>2 Na(+)(in) + 3 H(+)(out) = 2 Na(+)(out) + 3 H(+)(in)</text>
        <dbReference type="Rhea" id="RHEA:29247"/>
        <dbReference type="ChEBI" id="CHEBI:15378"/>
        <dbReference type="ChEBI" id="CHEBI:29101"/>
    </reaction>
    <physiologicalReaction direction="left-to-right" evidence="1">
        <dbReference type="Rhea" id="RHEA:29248"/>
    </physiologicalReaction>
</comment>
<comment type="subcellular location">
    <subcellularLocation>
        <location evidence="1">Cell inner membrane</location>
        <topology evidence="1">Multi-pass membrane protein</topology>
    </subcellularLocation>
</comment>
<comment type="similarity">
    <text evidence="1">Belongs to the NhaB Na(+)/H(+) (TC 2.A.34) antiporter family.</text>
</comment>
<name>NHAB_SHESM</name>
<evidence type="ECO:0000255" key="1">
    <source>
        <dbReference type="HAMAP-Rule" id="MF_01599"/>
    </source>
</evidence>
<accession>Q0HJX2</accession>
<proteinExistence type="inferred from homology"/>
<protein>
    <recommendedName>
        <fullName evidence="1">Na(+)/H(+) antiporter NhaB</fullName>
    </recommendedName>
    <alternativeName>
        <fullName evidence="1">Sodium/proton antiporter NhaB</fullName>
    </alternativeName>
</protein>
<feature type="chain" id="PRO_0000333136" description="Na(+)/H(+) antiporter NhaB">
    <location>
        <begin position="1"/>
        <end position="533"/>
    </location>
</feature>
<feature type="transmembrane region" description="Helical" evidence="1">
    <location>
        <begin position="10"/>
        <end position="30"/>
    </location>
</feature>
<feature type="transmembrane region" description="Helical" evidence="1">
    <location>
        <begin position="67"/>
        <end position="87"/>
    </location>
</feature>
<feature type="transmembrane region" description="Helical" evidence="1">
    <location>
        <begin position="96"/>
        <end position="116"/>
    </location>
</feature>
<feature type="transmembrane region" description="Helical" evidence="1">
    <location>
        <begin position="131"/>
        <end position="165"/>
    </location>
</feature>
<feature type="transmembrane region" description="Helical" evidence="1">
    <location>
        <begin position="209"/>
        <end position="229"/>
    </location>
</feature>
<feature type="transmembrane region" description="Helical" evidence="1">
    <location>
        <begin position="247"/>
        <end position="267"/>
    </location>
</feature>
<feature type="transmembrane region" description="Helical" evidence="1">
    <location>
        <begin position="310"/>
        <end position="330"/>
    </location>
</feature>
<feature type="transmembrane region" description="Helical" evidence="1">
    <location>
        <begin position="355"/>
        <end position="375"/>
    </location>
</feature>
<feature type="transmembrane region" description="Helical" evidence="1">
    <location>
        <begin position="396"/>
        <end position="416"/>
    </location>
</feature>
<feature type="transmembrane region" description="Helical" evidence="1">
    <location>
        <begin position="454"/>
        <end position="474"/>
    </location>
</feature>
<feature type="transmembrane region" description="Helical" evidence="1">
    <location>
        <begin position="481"/>
        <end position="501"/>
    </location>
</feature>
<keyword id="KW-0050">Antiport</keyword>
<keyword id="KW-0997">Cell inner membrane</keyword>
<keyword id="KW-1003">Cell membrane</keyword>
<keyword id="KW-0406">Ion transport</keyword>
<keyword id="KW-0472">Membrane</keyword>
<keyword id="KW-0915">Sodium</keyword>
<keyword id="KW-0739">Sodium transport</keyword>
<keyword id="KW-0812">Transmembrane</keyword>
<keyword id="KW-1133">Transmembrane helix</keyword>
<keyword id="KW-0813">Transport</keyword>
<gene>
    <name evidence="1" type="primary">nhaB</name>
    <name type="ordered locus">Shewmr4_1567</name>
</gene>
<dbReference type="EMBL" id="CP000446">
    <property type="protein sequence ID" value="ABI38645.1"/>
    <property type="molecule type" value="Genomic_DNA"/>
</dbReference>
<dbReference type="RefSeq" id="WP_011622348.1">
    <property type="nucleotide sequence ID" value="NC_008321.1"/>
</dbReference>
<dbReference type="SMR" id="Q0HJX2"/>
<dbReference type="KEGG" id="she:Shewmr4_1567"/>
<dbReference type="HOGENOM" id="CLU_041110_0_0_6"/>
<dbReference type="GO" id="GO:0005886">
    <property type="term" value="C:plasma membrane"/>
    <property type="evidence" value="ECO:0007669"/>
    <property type="project" value="UniProtKB-SubCell"/>
</dbReference>
<dbReference type="GO" id="GO:0015385">
    <property type="term" value="F:sodium:proton antiporter activity"/>
    <property type="evidence" value="ECO:0007669"/>
    <property type="project" value="InterPro"/>
</dbReference>
<dbReference type="HAMAP" id="MF_01599">
    <property type="entry name" value="NhaB"/>
    <property type="match status" value="1"/>
</dbReference>
<dbReference type="InterPro" id="IPR004671">
    <property type="entry name" value="Na+/H+_antiporter_NhaB"/>
</dbReference>
<dbReference type="NCBIfam" id="TIGR00774">
    <property type="entry name" value="NhaB"/>
    <property type="match status" value="1"/>
</dbReference>
<dbReference type="NCBIfam" id="NF007093">
    <property type="entry name" value="PRK09547.1"/>
    <property type="match status" value="1"/>
</dbReference>
<dbReference type="PANTHER" id="PTHR43302:SF1">
    <property type="entry name" value="NA(+)_H(+) ANTIPORTER NHAB"/>
    <property type="match status" value="1"/>
</dbReference>
<dbReference type="PANTHER" id="PTHR43302">
    <property type="entry name" value="TRANSPORTER ARSB-RELATED"/>
    <property type="match status" value="1"/>
</dbReference>
<dbReference type="Pfam" id="PF06450">
    <property type="entry name" value="NhaB"/>
    <property type="match status" value="1"/>
</dbReference>
<reference key="1">
    <citation type="submission" date="2006-08" db="EMBL/GenBank/DDBJ databases">
        <title>Complete sequence of Shewanella sp. MR-4.</title>
        <authorList>
            <consortium name="US DOE Joint Genome Institute"/>
            <person name="Copeland A."/>
            <person name="Lucas S."/>
            <person name="Lapidus A."/>
            <person name="Barry K."/>
            <person name="Detter J.C."/>
            <person name="Glavina del Rio T."/>
            <person name="Hammon N."/>
            <person name="Israni S."/>
            <person name="Dalin E."/>
            <person name="Tice H."/>
            <person name="Pitluck S."/>
            <person name="Kiss H."/>
            <person name="Brettin T."/>
            <person name="Bruce D."/>
            <person name="Han C."/>
            <person name="Tapia R."/>
            <person name="Gilna P."/>
            <person name="Schmutz J."/>
            <person name="Larimer F."/>
            <person name="Land M."/>
            <person name="Hauser L."/>
            <person name="Kyrpides N."/>
            <person name="Mikhailova N."/>
            <person name="Nealson K."/>
            <person name="Konstantinidis K."/>
            <person name="Klappenbach J."/>
            <person name="Tiedje J."/>
            <person name="Richardson P."/>
        </authorList>
    </citation>
    <scope>NUCLEOTIDE SEQUENCE [LARGE SCALE GENOMIC DNA]</scope>
    <source>
        <strain>MR-4</strain>
    </source>
</reference>
<sequence>MPMTMSQAFIGNFLGNSPKWYKIAILSFLIINPILFFYVSPFVAGWVLVLEFIFTLAMALKCYPLQPGGLLAIQAVAIGMTSASQVLHEIEANLEVLLLLVFMVAGIYFMKQLLLFAFTKMITKVRSKILVSLMFCLASAFLSAFLDALTVIAVIITVAVGFYSIYHKVASGKDFSADHDHTSEGKNEDGENQLNEEELESFRGFLRNLLMHAGVGTALGGVCTMVGEPQNLIIAAQANWQFGEFAIRMSPVTVPVLFAGILTCFLVEKLRWFGYGAQLPEAVHKILCDYAAYEDARRTNKDKMKLVIQAFVGVWLIAGLALHLASVGLIGLSVIILTTAFNGITDEHALGKAFEEALPFTALLAVFFAVVAVIIDQQLFGPVIQWALNHEGNTQLVIFYIANGLLSMVSDNVFVGTVYINEVKAALINGQITRDQFDLLAVAINTGTNLPSVATPNGQAAFLFLLTSALAPLIRLSYGRMVWMALPYTIVLSIVGVMAIESGFLEQMTQYFYDSHAIIHHSVKEALAPAAAH</sequence>
<organism>
    <name type="scientific">Shewanella sp. (strain MR-4)</name>
    <dbReference type="NCBI Taxonomy" id="60480"/>
    <lineage>
        <taxon>Bacteria</taxon>
        <taxon>Pseudomonadati</taxon>
        <taxon>Pseudomonadota</taxon>
        <taxon>Gammaproteobacteria</taxon>
        <taxon>Alteromonadales</taxon>
        <taxon>Shewanellaceae</taxon>
        <taxon>Shewanella</taxon>
    </lineage>
</organism>